<feature type="chain" id="PRO_0000234555" description="Tax1-binding protein 1 homolog">
    <location>
        <begin position="1"/>
        <end position="814"/>
    </location>
</feature>
<feature type="zinc finger region" description="UBZ1-type 1" evidence="4">
    <location>
        <begin position="752"/>
        <end position="778"/>
    </location>
</feature>
<feature type="zinc finger region" description="UBZ1-type 2" evidence="4">
    <location>
        <begin position="779"/>
        <end position="805"/>
    </location>
</feature>
<feature type="region of interest" description="Oligomerization" evidence="1">
    <location>
        <begin position="320"/>
        <end position="420"/>
    </location>
</feature>
<feature type="region of interest" description="Disordered" evidence="5">
    <location>
        <begin position="701"/>
        <end position="733"/>
    </location>
</feature>
<feature type="coiled-coil region" evidence="3">
    <location>
        <begin position="144"/>
        <end position="623"/>
    </location>
</feature>
<feature type="binding site" evidence="4">
    <location>
        <position position="755"/>
    </location>
    <ligand>
        <name>Zn(2+)</name>
        <dbReference type="ChEBI" id="CHEBI:29105"/>
        <label>1</label>
    </ligand>
</feature>
<feature type="binding site" evidence="4">
    <location>
        <position position="758"/>
    </location>
    <ligand>
        <name>Zn(2+)</name>
        <dbReference type="ChEBI" id="CHEBI:29105"/>
        <label>1</label>
    </ligand>
</feature>
<feature type="binding site" evidence="4">
    <location>
        <position position="774"/>
    </location>
    <ligand>
        <name>Zn(2+)</name>
        <dbReference type="ChEBI" id="CHEBI:29105"/>
        <label>1</label>
    </ligand>
</feature>
<feature type="binding site" evidence="4">
    <location>
        <position position="778"/>
    </location>
    <ligand>
        <name>Zn(2+)</name>
        <dbReference type="ChEBI" id="CHEBI:29105"/>
        <label>1</label>
    </ligand>
</feature>
<feature type="binding site" evidence="4">
    <location>
        <position position="782"/>
    </location>
    <ligand>
        <name>Zn(2+)</name>
        <dbReference type="ChEBI" id="CHEBI:29105"/>
        <label>2</label>
    </ligand>
</feature>
<feature type="binding site" evidence="4">
    <location>
        <position position="785"/>
    </location>
    <ligand>
        <name>Zn(2+)</name>
        <dbReference type="ChEBI" id="CHEBI:29105"/>
        <label>2</label>
    </ligand>
</feature>
<feature type="binding site" evidence="4">
    <location>
        <position position="801"/>
    </location>
    <ligand>
        <name>Zn(2+)</name>
        <dbReference type="ChEBI" id="CHEBI:29105"/>
        <label>2</label>
    </ligand>
</feature>
<feature type="binding site" evidence="4">
    <location>
        <position position="805"/>
    </location>
    <ligand>
        <name>Zn(2+)</name>
        <dbReference type="ChEBI" id="CHEBI:29105"/>
        <label>2</label>
    </ligand>
</feature>
<feature type="modified residue" description="Phosphoserine" evidence="11">
    <location>
        <position position="124"/>
    </location>
</feature>
<feature type="modified residue" description="Phosphoserine" evidence="2">
    <location>
        <position position="138"/>
    </location>
</feature>
<feature type="modified residue" description="Phosphoserine" evidence="2">
    <location>
        <position position="225"/>
    </location>
</feature>
<feature type="modified residue" description="Phosphoserine; by IKKA" evidence="2 9">
    <location>
        <position position="619"/>
    </location>
</feature>
<feature type="modified residue" description="Phosphoserine" evidence="11">
    <location>
        <position position="632"/>
    </location>
</feature>
<feature type="modified residue" description="Phosphoserine; by IKKA" evidence="10 11">
    <location>
        <position position="693"/>
    </location>
</feature>
<feature type="sequence conflict" description="In Ref. 1; BAB23383." evidence="9" ref="1">
    <original>C</original>
    <variation>S</variation>
    <location>
        <position position="328"/>
    </location>
</feature>
<feature type="sequence conflict" description="In Ref. 1; BAB23383." evidence="9" ref="1">
    <original>Q</original>
    <variation>P</variation>
    <location>
        <position position="368"/>
    </location>
</feature>
<feature type="sequence conflict" description="In Ref. 1; BAE26880." evidence="9" ref="1">
    <original>H</original>
    <variation>Y</variation>
    <location>
        <position position="429"/>
    </location>
</feature>
<feature type="sequence conflict" description="In Ref. 1; BAB23383." evidence="9" ref="1">
    <original>P</original>
    <variation>T</variation>
    <location>
        <position position="658"/>
    </location>
</feature>
<feature type="sequence conflict" description="In Ref. 2; AAH14798." evidence="9" ref="2">
    <original>V</original>
    <variation>A</variation>
    <location>
        <position position="751"/>
    </location>
</feature>
<feature type="sequence conflict" description="In Ref. 1; BAB25721." evidence="9" ref="1">
    <original>P</original>
    <variation>H</variation>
    <location>
        <position position="764"/>
    </location>
</feature>
<comment type="function">
    <text evidence="2 7 8">Ubiquitin-binding adapter that participates in inflammatory, antiviral and innate immune processes as well as selective autophagy regulation (PubMed:18239685, PubMed:33207181). Plays a key role in the negative regulation of NF-kappa-B and IRF3 signalings by acting as an adapter for the ubiquitin-editing enzyme A20/TNFAIP3 to bind and inactivate its substrates. Disrupts the interactions between the E3 ubiquitin ligase TRAF3 and TBK1/IKBKE to attenuate 'Lys63'-linked polyubiquitination of TBK1 and thereby IFN-beta production (By similarity). Also recruits A20/TNFAIP3 to ubiquitinated signaling proteins TRAF6 and RIPK1, leading to their deubiquitination and disruption of IL-1 and TNF-induced NF-kappa-B signaling pathways (PubMed:18239685). Inhibits virus-induced apoptosis by inducing the 'Lys-48'-linked polyubiquitination and degradation of MAVS via recruitment of the E3 ligase ITCH, thereby attenuating MAVS-mediated apoptosis signaling (By similarity). As a macroautophagy/autophagy receptor, facilitates the xenophagic clearance of pathogenic bacteria such as Salmonella typhimurium and Mycobacterium tuberculosis. Upon NBR1 recruitment to the SQSTM1-ubiquitin condensates, acts as the major recruiter of RB1CC1 to these ubiquitin condensates to promote their autophagic degradation (By similarity). Mediates the autophagic degradation of other substrates including TICAM1 (By similarity).</text>
</comment>
<comment type="subunit">
    <text evidence="2 7">Homooligomer. Interacts with TNFAIP3. Interacts with STARD13. Interacts with MYO6. Interacts with TOM1; the interaction is indirect and is mediated by MYO6, which acts as a bridge between TOM1 and TAX1BP1. Interacts with MAVS; this interaction induces MAVS polyubiquitination. Interacts with TNIP1. Interacts with TRAF6; this interaction mediates deubiquitination of TRAF6 and inhibition of NF-kappa-B activation. Interacts with RIPK1; this interaction negatively regulates RIPK1 ubiquitination (PubMed:18239685). Interacts with NBR1. Interacts with TBK1. Interacts with RB1CC1. Interacts with SQSTM1. Interacts with AZI2. Interacts with TICAM1 and TRIM32; these interactions target TICAM1 to TAX1BP1-mediated selective autophagic degradation (By similarity).</text>
</comment>
<comment type="subcellular location">
    <subcellularLocation>
        <location evidence="2">Cytoplasm</location>
    </subcellularLocation>
    <subcellularLocation>
        <location evidence="2">Mitochondrion</location>
    </subcellularLocation>
    <subcellularLocation>
        <location evidence="2">Preautophagosomal structure</location>
    </subcellularLocation>
    <subcellularLocation>
        <location evidence="2">Cytoplasmic vesicle</location>
        <location evidence="2">Autophagosome</location>
    </subcellularLocation>
</comment>
<comment type="developmental stage">
    <text evidence="6">Expressed at 11.5 dpc and 12.5 dpc in distal limb and genital bud.</text>
</comment>
<comment type="domain">
    <text evidence="2">The C-terminal UBZ-type zinc fingers function as ubiquitin-binding domains.</text>
</comment>
<comment type="PTM">
    <text evidence="1">Phosphorylated in the C-terminal region by CHUK/IKKA leading to NF-kappa-B signaling down-regulation.</text>
</comment>
<comment type="disruption phenotype">
    <text evidence="7 8">Mice genetically knocked out for TAX1BP1 show no obvious abnormalities at birth, but develop age-dependent inflammatory cardiac valvulitis, die prematurely, and are hypersensitive to low doses of TNF-alpha and IL-1beta (PubMed:18239685). In addition, TAX1BP1 deletion impairs clearance of ubiquitinated protein aggregates (PubMed:33207181).</text>
</comment>
<proteinExistence type="evidence at protein level"/>
<gene>
    <name type="primary">Tax1bp1</name>
</gene>
<keyword id="KW-0053">Apoptosis</keyword>
<keyword id="KW-0175">Coiled coil</keyword>
<keyword id="KW-0963">Cytoplasm</keyword>
<keyword id="KW-0968">Cytoplasmic vesicle</keyword>
<keyword id="KW-0479">Metal-binding</keyword>
<keyword id="KW-0496">Mitochondrion</keyword>
<keyword id="KW-0597">Phosphoprotein</keyword>
<keyword id="KW-1185">Reference proteome</keyword>
<keyword id="KW-0677">Repeat</keyword>
<keyword id="KW-0862">Zinc</keyword>
<keyword id="KW-0863">Zinc-finger</keyword>
<dbReference type="EMBL" id="AK004574">
    <property type="protein sequence ID" value="BAB23383.1"/>
    <property type="molecule type" value="mRNA"/>
</dbReference>
<dbReference type="EMBL" id="AK008528">
    <property type="protein sequence ID" value="BAB25721.1"/>
    <property type="molecule type" value="mRNA"/>
</dbReference>
<dbReference type="EMBL" id="AK146076">
    <property type="protein sequence ID" value="BAE26880.1"/>
    <property type="molecule type" value="mRNA"/>
</dbReference>
<dbReference type="EMBL" id="BC014798">
    <property type="protein sequence ID" value="AAH14798.1"/>
    <property type="molecule type" value="mRNA"/>
</dbReference>
<dbReference type="CCDS" id="CCDS39490.1"/>
<dbReference type="RefSeq" id="NP_001342525.1">
    <property type="nucleotide sequence ID" value="NM_001355596.1"/>
</dbReference>
<dbReference type="RefSeq" id="NP_080092.2">
    <property type="nucleotide sequence ID" value="NM_025816.3"/>
</dbReference>
<dbReference type="RefSeq" id="XP_006506432.1">
    <property type="nucleotide sequence ID" value="XM_006506369.3"/>
</dbReference>
<dbReference type="BMRB" id="Q3UKC1"/>
<dbReference type="SMR" id="Q3UKC1"/>
<dbReference type="BioGRID" id="206586">
    <property type="interactions" value="21"/>
</dbReference>
<dbReference type="CORUM" id="Q3UKC1"/>
<dbReference type="FunCoup" id="Q3UKC1">
    <property type="interactions" value="2116"/>
</dbReference>
<dbReference type="IntAct" id="Q3UKC1">
    <property type="interactions" value="6"/>
</dbReference>
<dbReference type="MINT" id="Q3UKC1"/>
<dbReference type="STRING" id="10090.ENSMUSP00000079548"/>
<dbReference type="iPTMnet" id="Q3UKC1"/>
<dbReference type="PhosphoSitePlus" id="Q3UKC1"/>
<dbReference type="SwissPalm" id="Q3UKC1"/>
<dbReference type="jPOST" id="Q3UKC1"/>
<dbReference type="PaxDb" id="10090-ENSMUSP00000079548"/>
<dbReference type="PeptideAtlas" id="Q3UKC1"/>
<dbReference type="ProteomicsDB" id="254648"/>
<dbReference type="Pumba" id="Q3UKC1"/>
<dbReference type="Antibodypedia" id="12449">
    <property type="antibodies" value="245 antibodies from 29 providers"/>
</dbReference>
<dbReference type="DNASU" id="52440"/>
<dbReference type="Ensembl" id="ENSMUST00000080723.11">
    <property type="protein sequence ID" value="ENSMUSP00000079548.5"/>
    <property type="gene ID" value="ENSMUSG00000004535.13"/>
</dbReference>
<dbReference type="GeneID" id="52440"/>
<dbReference type="KEGG" id="mmu:52440"/>
<dbReference type="UCSC" id="uc009byz.2">
    <property type="organism name" value="mouse"/>
</dbReference>
<dbReference type="AGR" id="MGI:1289308"/>
<dbReference type="CTD" id="8887"/>
<dbReference type="MGI" id="MGI:1289308">
    <property type="gene designation" value="Tax1bp1"/>
</dbReference>
<dbReference type="VEuPathDB" id="HostDB:ENSMUSG00000004535"/>
<dbReference type="eggNOG" id="ENOG502QQ1D">
    <property type="taxonomic scope" value="Eukaryota"/>
</dbReference>
<dbReference type="GeneTree" id="ENSGT00950000183025"/>
<dbReference type="HOGENOM" id="CLU_021315_1_0_1"/>
<dbReference type="InParanoid" id="Q3UKC1"/>
<dbReference type="OMA" id="TPYIKPH"/>
<dbReference type="OrthoDB" id="10015001at2759"/>
<dbReference type="PhylomeDB" id="Q3UKC1"/>
<dbReference type="TreeFam" id="TF329501"/>
<dbReference type="Reactome" id="R-MMU-5357905">
    <property type="pathway name" value="Regulation of TNFR1 signaling"/>
</dbReference>
<dbReference type="Reactome" id="R-MMU-936440">
    <property type="pathway name" value="Negative regulators of DDX58/IFIH1 signaling"/>
</dbReference>
<dbReference type="BioGRID-ORCS" id="52440">
    <property type="hits" value="17 hits in 79 CRISPR screens"/>
</dbReference>
<dbReference type="ChiTaRS" id="Tax1bp1">
    <property type="organism name" value="mouse"/>
</dbReference>
<dbReference type="PRO" id="PR:Q3UKC1"/>
<dbReference type="Proteomes" id="UP000000589">
    <property type="component" value="Chromosome 6"/>
</dbReference>
<dbReference type="RNAct" id="Q3UKC1">
    <property type="molecule type" value="protein"/>
</dbReference>
<dbReference type="Bgee" id="ENSMUSG00000004535">
    <property type="expression patterns" value="Expressed in ileal epithelium and 267 other cell types or tissues"/>
</dbReference>
<dbReference type="ExpressionAtlas" id="Q3UKC1">
    <property type="expression patterns" value="baseline and differential"/>
</dbReference>
<dbReference type="GO" id="GO:0005776">
    <property type="term" value="C:autophagosome"/>
    <property type="evidence" value="ECO:0007669"/>
    <property type="project" value="UniProtKB-SubCell"/>
</dbReference>
<dbReference type="GO" id="GO:0031410">
    <property type="term" value="C:cytoplasmic vesicle"/>
    <property type="evidence" value="ECO:0007669"/>
    <property type="project" value="UniProtKB-KW"/>
</dbReference>
<dbReference type="GO" id="GO:0005739">
    <property type="term" value="C:mitochondrion"/>
    <property type="evidence" value="ECO:0007669"/>
    <property type="project" value="UniProtKB-SubCell"/>
</dbReference>
<dbReference type="GO" id="GO:0000407">
    <property type="term" value="C:phagophore assembly site"/>
    <property type="evidence" value="ECO:0007669"/>
    <property type="project" value="UniProtKB-SubCell"/>
</dbReference>
<dbReference type="GO" id="GO:0019900">
    <property type="term" value="F:kinase binding"/>
    <property type="evidence" value="ECO:0000353"/>
    <property type="project" value="BHF-UCL"/>
</dbReference>
<dbReference type="GO" id="GO:0035591">
    <property type="term" value="F:signaling adaptor activity"/>
    <property type="evidence" value="ECO:0000314"/>
    <property type="project" value="BHF-UCL"/>
</dbReference>
<dbReference type="GO" id="GO:0043130">
    <property type="term" value="F:ubiquitin binding"/>
    <property type="evidence" value="ECO:0000303"/>
    <property type="project" value="BHF-UCL"/>
</dbReference>
<dbReference type="GO" id="GO:0008270">
    <property type="term" value="F:zinc ion binding"/>
    <property type="evidence" value="ECO:0007669"/>
    <property type="project" value="UniProtKB-KW"/>
</dbReference>
<dbReference type="GO" id="GO:0006915">
    <property type="term" value="P:apoptotic process"/>
    <property type="evidence" value="ECO:0007669"/>
    <property type="project" value="UniProtKB-KW"/>
</dbReference>
<dbReference type="GO" id="GO:0043066">
    <property type="term" value="P:negative regulation of apoptotic process"/>
    <property type="evidence" value="ECO:0007669"/>
    <property type="project" value="Ensembl"/>
</dbReference>
<dbReference type="GO" id="GO:0043124">
    <property type="term" value="P:negative regulation of canonical NF-kappaB signal transduction"/>
    <property type="evidence" value="ECO:0000315"/>
    <property type="project" value="BHF-UCL"/>
</dbReference>
<dbReference type="GO" id="GO:0039532">
    <property type="term" value="P:negative regulation of cytoplasmic pattern recognition receptor signaling pathway"/>
    <property type="evidence" value="ECO:0007669"/>
    <property type="project" value="Ensembl"/>
</dbReference>
<dbReference type="GO" id="GO:2000660">
    <property type="term" value="P:negative regulation of interleukin-1-mediated signaling pathway"/>
    <property type="evidence" value="ECO:0000314"/>
    <property type="project" value="BHF-UCL"/>
</dbReference>
<dbReference type="GO" id="GO:0034144">
    <property type="term" value="P:negative regulation of toll-like receptor 4 signaling pathway"/>
    <property type="evidence" value="ECO:0007669"/>
    <property type="project" value="Ensembl"/>
</dbReference>
<dbReference type="GO" id="GO:0010804">
    <property type="term" value="P:negative regulation of tumor necrosis factor-mediated signaling pathway"/>
    <property type="evidence" value="ECO:0000314"/>
    <property type="project" value="BHF-UCL"/>
</dbReference>
<dbReference type="GO" id="GO:1905161">
    <property type="term" value="P:protein localization to phagocytic vesicle"/>
    <property type="evidence" value="ECO:0007669"/>
    <property type="project" value="Ensembl"/>
</dbReference>
<dbReference type="CDD" id="cd21969">
    <property type="entry name" value="Zn-C2H2_TAX1BP1_rpt1"/>
    <property type="match status" value="1"/>
</dbReference>
<dbReference type="CDD" id="cd21970">
    <property type="entry name" value="Zn-C2H2_TAX1BP1_rpt2"/>
    <property type="match status" value="1"/>
</dbReference>
<dbReference type="FunFam" id="2.60.40.2840:FF:000002">
    <property type="entry name" value="Tax1-binding protein 1 isoform 2"/>
    <property type="match status" value="1"/>
</dbReference>
<dbReference type="Gene3D" id="2.60.40.2840">
    <property type="match status" value="1"/>
</dbReference>
<dbReference type="Gene3D" id="6.20.250.40">
    <property type="match status" value="1"/>
</dbReference>
<dbReference type="InterPro" id="IPR012852">
    <property type="entry name" value="CALCOCO1-like"/>
</dbReference>
<dbReference type="InterPro" id="IPR041641">
    <property type="entry name" value="CALCOCO1/2_Zn_UBZ1"/>
</dbReference>
<dbReference type="InterPro" id="IPR041611">
    <property type="entry name" value="SKICH"/>
</dbReference>
<dbReference type="InterPro" id="IPR051002">
    <property type="entry name" value="UBA_autophagy_assoc_protein"/>
</dbReference>
<dbReference type="PANTHER" id="PTHR31915">
    <property type="entry name" value="SKICH DOMAIN-CONTAINING PROTEIN"/>
    <property type="match status" value="1"/>
</dbReference>
<dbReference type="PANTHER" id="PTHR31915:SF8">
    <property type="entry name" value="TAX1-BINDING PROTEIN 1"/>
    <property type="match status" value="1"/>
</dbReference>
<dbReference type="Pfam" id="PF07888">
    <property type="entry name" value="CALCOCO1"/>
    <property type="match status" value="1"/>
</dbReference>
<dbReference type="Pfam" id="PF17751">
    <property type="entry name" value="SKICH"/>
    <property type="match status" value="1"/>
</dbReference>
<dbReference type="Pfam" id="PF18112">
    <property type="entry name" value="Zn-C2H2_12"/>
    <property type="match status" value="2"/>
</dbReference>
<dbReference type="PROSITE" id="PS51905">
    <property type="entry name" value="ZF_UBZ1"/>
    <property type="match status" value="2"/>
</dbReference>
<accession>Q3UKC1</accession>
<accession>Q91YT6</accession>
<accession>Q9CVF0</accession>
<accession>Q9DC45</accession>
<name>TAXB1_MOUSE</name>
<organism>
    <name type="scientific">Mus musculus</name>
    <name type="common">Mouse</name>
    <dbReference type="NCBI Taxonomy" id="10090"/>
    <lineage>
        <taxon>Eukaryota</taxon>
        <taxon>Metazoa</taxon>
        <taxon>Chordata</taxon>
        <taxon>Craniata</taxon>
        <taxon>Vertebrata</taxon>
        <taxon>Euteleostomi</taxon>
        <taxon>Mammalia</taxon>
        <taxon>Eutheria</taxon>
        <taxon>Euarchontoglires</taxon>
        <taxon>Glires</taxon>
        <taxon>Rodentia</taxon>
        <taxon>Myomorpha</taxon>
        <taxon>Muroidea</taxon>
        <taxon>Muridae</taxon>
        <taxon>Murinae</taxon>
        <taxon>Mus</taxon>
        <taxon>Mus</taxon>
    </lineage>
</organism>
<evidence type="ECO:0000250" key="1"/>
<evidence type="ECO:0000250" key="2">
    <source>
        <dbReference type="UniProtKB" id="Q86VP1"/>
    </source>
</evidence>
<evidence type="ECO:0000255" key="3"/>
<evidence type="ECO:0000255" key="4">
    <source>
        <dbReference type="PROSITE-ProRule" id="PRU01253"/>
    </source>
</evidence>
<evidence type="ECO:0000256" key="5">
    <source>
        <dbReference type="SAM" id="MobiDB-lite"/>
    </source>
</evidence>
<evidence type="ECO:0000269" key="6">
    <source>
    </source>
</evidence>
<evidence type="ECO:0000269" key="7">
    <source>
    </source>
</evidence>
<evidence type="ECO:0000269" key="8">
    <source>
    </source>
</evidence>
<evidence type="ECO:0000305" key="9"/>
<evidence type="ECO:0007744" key="10">
    <source>
    </source>
</evidence>
<evidence type="ECO:0007744" key="11">
    <source>
    </source>
</evidence>
<protein>
    <recommendedName>
        <fullName>Tax1-binding protein 1 homolog</fullName>
    </recommendedName>
</protein>
<sequence>MTSFQEVQLQTSNFAHVIFQNVAKSYLPNAHLECHYTLTPYIHPHSKDWVGIFKVGWSTARDYYTFLWSPMPEHYVEGSTVNCVLAFQGYYLPNDDGEFYQFCYVTHKGEIRGASTPFQFRAASPVEELLTMEDEGNSDMLVVTTKAGLLELKIEKTLKEKEELLKLIAVLEKETAQLREQVGRMERELSQEKGRCEQLQAEQKGLLEVSQSLRVENEEFMKRYSDATAKVQQLEEDIVSVTHKAIEKETDLDSLKDKLRKAQHEREQLECQLQTEKDEKELYKVHLKNTEIENTKLVSEIQTLKNLDGNKESMITHFKEEISKLQSCLADKENLYRALLLTTSNKEDTLFLKEQLRKAEEQVQATRQELIFLTKELSDAVNVRDKTMADLHTARLENERVKKQLADTLAELQLHAVKKDQEKTDTLEHELRREVEDLKLRLQMAADHYREKFKECQRLQKQINKLSDQAASTNSVFTKKMGSQQKVNDASINTDPAASTSASAVDVKPAASCAETGFDMSTKDHVCEMTKEIAEKIEKYNKCKQLLQDEKTKCNKYAEELAKMELKWKEQVKIAENVKLELAEVEDNYKVQLAEKEKEINGLASYLENLSREKELTKSLEDQKGRKLEGQSPQQVSRCLNTCSEQNGLLPPLSSAQPVLQYGNPYSAQETRDGADGAFYPDEIQRPPVRVPSWEDNVVCSQPARNLSRPDGLEDPEDSREDENVPIPPDPANQHLRSHGAGFCFDSSFDVHKKCPLCELMFPPNYDQTKFEEHVESHWKVCPMCSEQFPPDYDQQGFERHVQTHFDQNVLNFD</sequence>
<reference key="1">
    <citation type="journal article" date="2005" name="Science">
        <title>The transcriptional landscape of the mammalian genome.</title>
        <authorList>
            <person name="Carninci P."/>
            <person name="Kasukawa T."/>
            <person name="Katayama S."/>
            <person name="Gough J."/>
            <person name="Frith M.C."/>
            <person name="Maeda N."/>
            <person name="Oyama R."/>
            <person name="Ravasi T."/>
            <person name="Lenhard B."/>
            <person name="Wells C."/>
            <person name="Kodzius R."/>
            <person name="Shimokawa K."/>
            <person name="Bajic V.B."/>
            <person name="Brenner S.E."/>
            <person name="Batalov S."/>
            <person name="Forrest A.R."/>
            <person name="Zavolan M."/>
            <person name="Davis M.J."/>
            <person name="Wilming L.G."/>
            <person name="Aidinis V."/>
            <person name="Allen J.E."/>
            <person name="Ambesi-Impiombato A."/>
            <person name="Apweiler R."/>
            <person name="Aturaliya R.N."/>
            <person name="Bailey T.L."/>
            <person name="Bansal M."/>
            <person name="Baxter L."/>
            <person name="Beisel K.W."/>
            <person name="Bersano T."/>
            <person name="Bono H."/>
            <person name="Chalk A.M."/>
            <person name="Chiu K.P."/>
            <person name="Choudhary V."/>
            <person name="Christoffels A."/>
            <person name="Clutterbuck D.R."/>
            <person name="Crowe M.L."/>
            <person name="Dalla E."/>
            <person name="Dalrymple B.P."/>
            <person name="de Bono B."/>
            <person name="Della Gatta G."/>
            <person name="di Bernardo D."/>
            <person name="Down T."/>
            <person name="Engstrom P."/>
            <person name="Fagiolini M."/>
            <person name="Faulkner G."/>
            <person name="Fletcher C.F."/>
            <person name="Fukushima T."/>
            <person name="Furuno M."/>
            <person name="Futaki S."/>
            <person name="Gariboldi M."/>
            <person name="Georgii-Hemming P."/>
            <person name="Gingeras T.R."/>
            <person name="Gojobori T."/>
            <person name="Green R.E."/>
            <person name="Gustincich S."/>
            <person name="Harbers M."/>
            <person name="Hayashi Y."/>
            <person name="Hensch T.K."/>
            <person name="Hirokawa N."/>
            <person name="Hill D."/>
            <person name="Huminiecki L."/>
            <person name="Iacono M."/>
            <person name="Ikeo K."/>
            <person name="Iwama A."/>
            <person name="Ishikawa T."/>
            <person name="Jakt M."/>
            <person name="Kanapin A."/>
            <person name="Katoh M."/>
            <person name="Kawasawa Y."/>
            <person name="Kelso J."/>
            <person name="Kitamura H."/>
            <person name="Kitano H."/>
            <person name="Kollias G."/>
            <person name="Krishnan S.P."/>
            <person name="Kruger A."/>
            <person name="Kummerfeld S.K."/>
            <person name="Kurochkin I.V."/>
            <person name="Lareau L.F."/>
            <person name="Lazarevic D."/>
            <person name="Lipovich L."/>
            <person name="Liu J."/>
            <person name="Liuni S."/>
            <person name="McWilliam S."/>
            <person name="Madan Babu M."/>
            <person name="Madera M."/>
            <person name="Marchionni L."/>
            <person name="Matsuda H."/>
            <person name="Matsuzawa S."/>
            <person name="Miki H."/>
            <person name="Mignone F."/>
            <person name="Miyake S."/>
            <person name="Morris K."/>
            <person name="Mottagui-Tabar S."/>
            <person name="Mulder N."/>
            <person name="Nakano N."/>
            <person name="Nakauchi H."/>
            <person name="Ng P."/>
            <person name="Nilsson R."/>
            <person name="Nishiguchi S."/>
            <person name="Nishikawa S."/>
            <person name="Nori F."/>
            <person name="Ohara O."/>
            <person name="Okazaki Y."/>
            <person name="Orlando V."/>
            <person name="Pang K.C."/>
            <person name="Pavan W.J."/>
            <person name="Pavesi G."/>
            <person name="Pesole G."/>
            <person name="Petrovsky N."/>
            <person name="Piazza S."/>
            <person name="Reed J."/>
            <person name="Reid J.F."/>
            <person name="Ring B.Z."/>
            <person name="Ringwald M."/>
            <person name="Rost B."/>
            <person name="Ruan Y."/>
            <person name="Salzberg S.L."/>
            <person name="Sandelin A."/>
            <person name="Schneider C."/>
            <person name="Schoenbach C."/>
            <person name="Sekiguchi K."/>
            <person name="Semple C.A."/>
            <person name="Seno S."/>
            <person name="Sessa L."/>
            <person name="Sheng Y."/>
            <person name="Shibata Y."/>
            <person name="Shimada H."/>
            <person name="Shimada K."/>
            <person name="Silva D."/>
            <person name="Sinclair B."/>
            <person name="Sperling S."/>
            <person name="Stupka E."/>
            <person name="Sugiura K."/>
            <person name="Sultana R."/>
            <person name="Takenaka Y."/>
            <person name="Taki K."/>
            <person name="Tammoja K."/>
            <person name="Tan S.L."/>
            <person name="Tang S."/>
            <person name="Taylor M.S."/>
            <person name="Tegner J."/>
            <person name="Teichmann S.A."/>
            <person name="Ueda H.R."/>
            <person name="van Nimwegen E."/>
            <person name="Verardo R."/>
            <person name="Wei C.L."/>
            <person name="Yagi K."/>
            <person name="Yamanishi H."/>
            <person name="Zabarovsky E."/>
            <person name="Zhu S."/>
            <person name="Zimmer A."/>
            <person name="Hide W."/>
            <person name="Bult C."/>
            <person name="Grimmond S.M."/>
            <person name="Teasdale R.D."/>
            <person name="Liu E.T."/>
            <person name="Brusic V."/>
            <person name="Quackenbush J."/>
            <person name="Wahlestedt C."/>
            <person name="Mattick J.S."/>
            <person name="Hume D.A."/>
            <person name="Kai C."/>
            <person name="Sasaki D."/>
            <person name="Tomaru Y."/>
            <person name="Fukuda S."/>
            <person name="Kanamori-Katayama M."/>
            <person name="Suzuki M."/>
            <person name="Aoki J."/>
            <person name="Arakawa T."/>
            <person name="Iida J."/>
            <person name="Imamura K."/>
            <person name="Itoh M."/>
            <person name="Kato T."/>
            <person name="Kawaji H."/>
            <person name="Kawagashira N."/>
            <person name="Kawashima T."/>
            <person name="Kojima M."/>
            <person name="Kondo S."/>
            <person name="Konno H."/>
            <person name="Nakano K."/>
            <person name="Ninomiya N."/>
            <person name="Nishio T."/>
            <person name="Okada M."/>
            <person name="Plessy C."/>
            <person name="Shibata K."/>
            <person name="Shiraki T."/>
            <person name="Suzuki S."/>
            <person name="Tagami M."/>
            <person name="Waki K."/>
            <person name="Watahiki A."/>
            <person name="Okamura-Oho Y."/>
            <person name="Suzuki H."/>
            <person name="Kawai J."/>
            <person name="Hayashizaki Y."/>
        </authorList>
    </citation>
    <scope>NUCLEOTIDE SEQUENCE [LARGE SCALE MRNA]</scope>
    <source>
        <strain>C57BL/6J</strain>
        <tissue>Lung</tissue>
        <tissue>Placenta</tissue>
        <tissue>Small intestine</tissue>
    </source>
</reference>
<reference key="2">
    <citation type="journal article" date="2004" name="Genome Res.">
        <title>The status, quality, and expansion of the NIH full-length cDNA project: the Mammalian Gene Collection (MGC).</title>
        <authorList>
            <consortium name="The MGC Project Team"/>
        </authorList>
    </citation>
    <scope>NUCLEOTIDE SEQUENCE [LARGE SCALE MRNA]</scope>
    <source>
        <strain>FVB/N</strain>
        <tissue>Mammary gland</tissue>
    </source>
</reference>
<reference key="3">
    <citation type="journal article" date="1999" name="Oncogene">
        <title>The zinc finger protein A20 interacts with a novel anti-apoptotic protein which is cleaved by specific caspases.</title>
        <authorList>
            <person name="de Valck D."/>
            <person name="Jin D.-Y."/>
            <person name="Heyninck K."/>
            <person name="van de Craen M."/>
            <person name="Contreras R."/>
            <person name="Fiers W."/>
            <person name="Jeang K.-T."/>
            <person name="Beyaert R."/>
        </authorList>
    </citation>
    <scope>INTERACTION WITH TNFAIP3</scope>
</reference>
<reference key="4">
    <citation type="journal article" date="2004" name="Evol. Dev.">
        <title>Conserved expression domains for genes upstream and within the HoxA and HoxD clusters suggests a long-range enhancer existed before cluster duplication.</title>
        <authorList>
            <person name="Lehoczky J.A."/>
            <person name="Williams M.E."/>
            <person name="Innis J.W."/>
        </authorList>
    </citation>
    <scope>DEVELOPMENTAL STAGE</scope>
</reference>
<reference key="5">
    <citation type="journal article" date="2008" name="EMBO J.">
        <title>Inflammatory cardiac valvulitis in TAX1BP1-deficient mice through selective NF-kappaB activation.</title>
        <authorList>
            <person name="Iha H."/>
            <person name="Peloponese J.M."/>
            <person name="Verstrepen L."/>
            <person name="Zapart G."/>
            <person name="Ikeda F."/>
            <person name="Smith C.D."/>
            <person name="Starost M.F."/>
            <person name="Yedavalli V."/>
            <person name="Heyninck K."/>
            <person name="Dikic I."/>
            <person name="Beyaert R."/>
            <person name="Jeang K.T."/>
        </authorList>
    </citation>
    <scope>DISRUPTION PHENOTYPE</scope>
    <scope>FUNCTION</scope>
    <scope>INTERACTION WITH RIPK1</scope>
</reference>
<reference key="6">
    <citation type="journal article" date="2009" name="Immunity">
        <title>The phagosomal proteome in interferon-gamma-activated macrophages.</title>
        <authorList>
            <person name="Trost M."/>
            <person name="English L."/>
            <person name="Lemieux S."/>
            <person name="Courcelles M."/>
            <person name="Desjardins M."/>
            <person name="Thibault P."/>
        </authorList>
    </citation>
    <scope>PHOSPHORYLATION [LARGE SCALE ANALYSIS] AT SER-693</scope>
    <scope>IDENTIFICATION BY MASS SPECTROMETRY [LARGE SCALE ANALYSIS]</scope>
</reference>
<reference key="7">
    <citation type="journal article" date="2010" name="Cell">
        <title>A tissue-specific atlas of mouse protein phosphorylation and expression.</title>
        <authorList>
            <person name="Huttlin E.L."/>
            <person name="Jedrychowski M.P."/>
            <person name="Elias J.E."/>
            <person name="Goswami T."/>
            <person name="Rad R."/>
            <person name="Beausoleil S.A."/>
            <person name="Villen J."/>
            <person name="Haas W."/>
            <person name="Sowa M.E."/>
            <person name="Gygi S.P."/>
        </authorList>
    </citation>
    <scope>PHOSPHORYLATION [LARGE SCALE ANALYSIS] AT SER-124; SER-632 AND SER-693</scope>
    <scope>IDENTIFICATION BY MASS SPECTROMETRY [LARGE SCALE ANALYSIS]</scope>
    <source>
        <tissue>Brain</tissue>
        <tissue>Lung</tissue>
        <tissue>Pancreas</tissue>
        <tissue>Spleen</tissue>
        <tissue>Testis</tissue>
    </source>
</reference>
<reference key="8">
    <citation type="journal article" date="2020" name="Mol. Cell">
        <title>Loss of TAX1BP1-Directed Autophagy Results in Protein Aggregate Accumulation in the Brain.</title>
        <authorList>
            <person name="Sarraf S.A."/>
            <person name="Shah H.V."/>
            <person name="Kanfer G."/>
            <person name="Pickrell A.M."/>
            <person name="Holtzclaw L.A."/>
            <person name="Ward M.E."/>
            <person name="Youle R.J."/>
        </authorList>
    </citation>
    <scope>FUNCTION</scope>
    <scope>DISRUPTION PHENOTYPE</scope>
    <scope>TISSUE SPECIFICITY</scope>
</reference>